<reference key="1">
    <citation type="journal article" date="2008" name="BMC Genomics">
        <title>The genome of Aeromonas salmonicida subsp. salmonicida A449: insights into the evolution of a fish pathogen.</title>
        <authorList>
            <person name="Reith M.E."/>
            <person name="Singh R.K."/>
            <person name="Curtis B."/>
            <person name="Boyd J.M."/>
            <person name="Bouevitch A."/>
            <person name="Kimball J."/>
            <person name="Munholland J."/>
            <person name="Murphy C."/>
            <person name="Sarty D."/>
            <person name="Williams J."/>
            <person name="Nash J.H."/>
            <person name="Johnson S.C."/>
            <person name="Brown L.L."/>
        </authorList>
    </citation>
    <scope>NUCLEOTIDE SEQUENCE [LARGE SCALE GENOMIC DNA]</scope>
    <source>
        <strain>A449</strain>
    </source>
</reference>
<sequence length="298" mass="32595">METQRLRIAMQKSGRLSQDSQALFKSCGLKINLREQRLIAHVENMPIDILRVRDDDIPGLVMEGVVDLGIIGENVLEEAQLIRASQGLPAQVKTLKQLDFGGCRLSLAVPDDVAYTGPESLAGKRIATSYPGLLKRFFDEKGLNFKSVMLGGSVEVAPRAGLADAICDLVSTGATLEANGLKEVEVIYRSKAVLVQAPNPLNEAKQKLIDKLLPRIQGMQQARESKYIMLHAPKDKLDAITDLLPGAERPTIMQLAGDTNQVALHVVSSETLFWETMEQLKALGASSILVLPIEKMME</sequence>
<evidence type="ECO:0000255" key="1">
    <source>
        <dbReference type="HAMAP-Rule" id="MF_00079"/>
    </source>
</evidence>
<proteinExistence type="inferred from homology"/>
<keyword id="KW-0028">Amino-acid biosynthesis</keyword>
<keyword id="KW-0067">ATP-binding</keyword>
<keyword id="KW-0963">Cytoplasm</keyword>
<keyword id="KW-0328">Glycosyltransferase</keyword>
<keyword id="KW-0368">Histidine biosynthesis</keyword>
<keyword id="KW-0460">Magnesium</keyword>
<keyword id="KW-0479">Metal-binding</keyword>
<keyword id="KW-0547">Nucleotide-binding</keyword>
<keyword id="KW-0808">Transferase</keyword>
<accession>A4SMP5</accession>
<organism>
    <name type="scientific">Aeromonas salmonicida (strain A449)</name>
    <dbReference type="NCBI Taxonomy" id="382245"/>
    <lineage>
        <taxon>Bacteria</taxon>
        <taxon>Pseudomonadati</taxon>
        <taxon>Pseudomonadota</taxon>
        <taxon>Gammaproteobacteria</taxon>
        <taxon>Aeromonadales</taxon>
        <taxon>Aeromonadaceae</taxon>
        <taxon>Aeromonas</taxon>
    </lineage>
</organism>
<name>HIS1_AERS4</name>
<gene>
    <name evidence="1" type="primary">hisG</name>
    <name type="ordered locus">ASA_2101</name>
</gene>
<comment type="function">
    <text evidence="1">Catalyzes the condensation of ATP and 5-phosphoribose 1-diphosphate to form N'-(5'-phosphoribosyl)-ATP (PR-ATP). Has a crucial role in the pathway because the rate of histidine biosynthesis seems to be controlled primarily by regulation of HisG enzymatic activity.</text>
</comment>
<comment type="catalytic activity">
    <reaction evidence="1">
        <text>1-(5-phospho-beta-D-ribosyl)-ATP + diphosphate = 5-phospho-alpha-D-ribose 1-diphosphate + ATP</text>
        <dbReference type="Rhea" id="RHEA:18473"/>
        <dbReference type="ChEBI" id="CHEBI:30616"/>
        <dbReference type="ChEBI" id="CHEBI:33019"/>
        <dbReference type="ChEBI" id="CHEBI:58017"/>
        <dbReference type="ChEBI" id="CHEBI:73183"/>
        <dbReference type="EC" id="2.4.2.17"/>
    </reaction>
</comment>
<comment type="cofactor">
    <cofactor evidence="1">
        <name>Mg(2+)</name>
        <dbReference type="ChEBI" id="CHEBI:18420"/>
    </cofactor>
</comment>
<comment type="activity regulation">
    <text evidence="1">Feedback inhibited by histidine.</text>
</comment>
<comment type="pathway">
    <text evidence="1">Amino-acid biosynthesis; L-histidine biosynthesis; L-histidine from 5-phospho-alpha-D-ribose 1-diphosphate: step 1/9.</text>
</comment>
<comment type="subcellular location">
    <subcellularLocation>
        <location evidence="1">Cytoplasm</location>
    </subcellularLocation>
</comment>
<comment type="similarity">
    <text evidence="1">Belongs to the ATP phosphoribosyltransferase family. Long subfamily.</text>
</comment>
<feature type="chain" id="PRO_1000004439" description="ATP phosphoribosyltransferase">
    <location>
        <begin position="1"/>
        <end position="298"/>
    </location>
</feature>
<protein>
    <recommendedName>
        <fullName evidence="1">ATP phosphoribosyltransferase</fullName>
        <shortName evidence="1">ATP-PRT</shortName>
        <shortName evidence="1">ATP-PRTase</shortName>
        <ecNumber evidence="1">2.4.2.17</ecNumber>
    </recommendedName>
</protein>
<dbReference type="EC" id="2.4.2.17" evidence="1"/>
<dbReference type="EMBL" id="CP000644">
    <property type="protein sequence ID" value="ABO90167.1"/>
    <property type="molecule type" value="Genomic_DNA"/>
</dbReference>
<dbReference type="RefSeq" id="WP_005311391.1">
    <property type="nucleotide sequence ID" value="NC_009348.1"/>
</dbReference>
<dbReference type="SMR" id="A4SMP5"/>
<dbReference type="STRING" id="29491.GCA_000820065_00710"/>
<dbReference type="GeneID" id="79879942"/>
<dbReference type="KEGG" id="asa:ASA_2101"/>
<dbReference type="eggNOG" id="COG0040">
    <property type="taxonomic scope" value="Bacteria"/>
</dbReference>
<dbReference type="HOGENOM" id="CLU_038115_1_0_6"/>
<dbReference type="UniPathway" id="UPA00031">
    <property type="reaction ID" value="UER00006"/>
</dbReference>
<dbReference type="Proteomes" id="UP000000225">
    <property type="component" value="Chromosome"/>
</dbReference>
<dbReference type="GO" id="GO:0005737">
    <property type="term" value="C:cytoplasm"/>
    <property type="evidence" value="ECO:0007669"/>
    <property type="project" value="UniProtKB-SubCell"/>
</dbReference>
<dbReference type="GO" id="GO:0005524">
    <property type="term" value="F:ATP binding"/>
    <property type="evidence" value="ECO:0007669"/>
    <property type="project" value="UniProtKB-KW"/>
</dbReference>
<dbReference type="GO" id="GO:0003879">
    <property type="term" value="F:ATP phosphoribosyltransferase activity"/>
    <property type="evidence" value="ECO:0007669"/>
    <property type="project" value="UniProtKB-UniRule"/>
</dbReference>
<dbReference type="GO" id="GO:0000287">
    <property type="term" value="F:magnesium ion binding"/>
    <property type="evidence" value="ECO:0007669"/>
    <property type="project" value="UniProtKB-UniRule"/>
</dbReference>
<dbReference type="GO" id="GO:0000105">
    <property type="term" value="P:L-histidine biosynthetic process"/>
    <property type="evidence" value="ECO:0007669"/>
    <property type="project" value="UniProtKB-UniRule"/>
</dbReference>
<dbReference type="CDD" id="cd13592">
    <property type="entry name" value="PBP2_HisGL2"/>
    <property type="match status" value="1"/>
</dbReference>
<dbReference type="FunFam" id="3.30.70.120:FF:000002">
    <property type="entry name" value="ATP phosphoribosyltransferase"/>
    <property type="match status" value="1"/>
</dbReference>
<dbReference type="FunFam" id="3.40.190.10:FF:000008">
    <property type="entry name" value="ATP phosphoribosyltransferase"/>
    <property type="match status" value="1"/>
</dbReference>
<dbReference type="Gene3D" id="3.30.70.120">
    <property type="match status" value="1"/>
</dbReference>
<dbReference type="Gene3D" id="3.40.190.10">
    <property type="entry name" value="Periplasmic binding protein-like II"/>
    <property type="match status" value="2"/>
</dbReference>
<dbReference type="HAMAP" id="MF_00079">
    <property type="entry name" value="HisG_Long"/>
    <property type="match status" value="1"/>
</dbReference>
<dbReference type="InterPro" id="IPR020621">
    <property type="entry name" value="ATP-PRT_HisG_long"/>
</dbReference>
<dbReference type="InterPro" id="IPR013820">
    <property type="entry name" value="ATP_PRibTrfase_cat"/>
</dbReference>
<dbReference type="InterPro" id="IPR018198">
    <property type="entry name" value="ATP_PRibTrfase_CS"/>
</dbReference>
<dbReference type="InterPro" id="IPR001348">
    <property type="entry name" value="ATP_PRibTrfase_HisG"/>
</dbReference>
<dbReference type="InterPro" id="IPR013115">
    <property type="entry name" value="HisG_C"/>
</dbReference>
<dbReference type="InterPro" id="IPR011322">
    <property type="entry name" value="N-reg_PII-like_a/b"/>
</dbReference>
<dbReference type="InterPro" id="IPR015867">
    <property type="entry name" value="N-reg_PII/ATP_PRibTrfase_C"/>
</dbReference>
<dbReference type="NCBIfam" id="TIGR00070">
    <property type="entry name" value="hisG"/>
    <property type="match status" value="1"/>
</dbReference>
<dbReference type="NCBIfam" id="TIGR03455">
    <property type="entry name" value="HisG_C-term"/>
    <property type="match status" value="1"/>
</dbReference>
<dbReference type="PANTHER" id="PTHR21403:SF8">
    <property type="entry name" value="ATP PHOSPHORIBOSYLTRANSFERASE"/>
    <property type="match status" value="1"/>
</dbReference>
<dbReference type="PANTHER" id="PTHR21403">
    <property type="entry name" value="ATP PHOSPHORIBOSYLTRANSFERASE ATP-PRTASE"/>
    <property type="match status" value="1"/>
</dbReference>
<dbReference type="Pfam" id="PF01634">
    <property type="entry name" value="HisG"/>
    <property type="match status" value="1"/>
</dbReference>
<dbReference type="Pfam" id="PF08029">
    <property type="entry name" value="HisG_C"/>
    <property type="match status" value="1"/>
</dbReference>
<dbReference type="SUPFAM" id="SSF54913">
    <property type="entry name" value="GlnB-like"/>
    <property type="match status" value="1"/>
</dbReference>
<dbReference type="SUPFAM" id="SSF53850">
    <property type="entry name" value="Periplasmic binding protein-like II"/>
    <property type="match status" value="1"/>
</dbReference>
<dbReference type="PROSITE" id="PS01316">
    <property type="entry name" value="ATP_P_PHORIBOSYLTR"/>
    <property type="match status" value="1"/>
</dbReference>